<gene>
    <name evidence="1" type="primary">aspS</name>
    <name type="ordered locus">HP_0617</name>
</gene>
<accession>P56459</accession>
<organism>
    <name type="scientific">Helicobacter pylori (strain ATCC 700392 / 26695)</name>
    <name type="common">Campylobacter pylori</name>
    <dbReference type="NCBI Taxonomy" id="85962"/>
    <lineage>
        <taxon>Bacteria</taxon>
        <taxon>Pseudomonadati</taxon>
        <taxon>Campylobacterota</taxon>
        <taxon>Epsilonproteobacteria</taxon>
        <taxon>Campylobacterales</taxon>
        <taxon>Helicobacteraceae</taxon>
        <taxon>Helicobacter</taxon>
    </lineage>
</organism>
<reference key="1">
    <citation type="journal article" date="1997" name="Nature">
        <title>The complete genome sequence of the gastric pathogen Helicobacter pylori.</title>
        <authorList>
            <person name="Tomb J.-F."/>
            <person name="White O."/>
            <person name="Kerlavage A.R."/>
            <person name="Clayton R.A."/>
            <person name="Sutton G.G."/>
            <person name="Fleischmann R.D."/>
            <person name="Ketchum K.A."/>
            <person name="Klenk H.-P."/>
            <person name="Gill S.R."/>
            <person name="Dougherty B.A."/>
            <person name="Nelson K.E."/>
            <person name="Quackenbush J."/>
            <person name="Zhou L."/>
            <person name="Kirkness E.F."/>
            <person name="Peterson S.N."/>
            <person name="Loftus B.J."/>
            <person name="Richardson D.L."/>
            <person name="Dodson R.J."/>
            <person name="Khalak H.G."/>
            <person name="Glodek A."/>
            <person name="McKenney K."/>
            <person name="FitzGerald L.M."/>
            <person name="Lee N."/>
            <person name="Adams M.D."/>
            <person name="Hickey E.K."/>
            <person name="Berg D.E."/>
            <person name="Gocayne J.D."/>
            <person name="Utterback T.R."/>
            <person name="Peterson J.D."/>
            <person name="Kelley J.M."/>
            <person name="Cotton M.D."/>
            <person name="Weidman J.F."/>
            <person name="Fujii C."/>
            <person name="Bowman C."/>
            <person name="Watthey L."/>
            <person name="Wallin E."/>
            <person name="Hayes W.S."/>
            <person name="Borodovsky M."/>
            <person name="Karp P.D."/>
            <person name="Smith H.O."/>
            <person name="Fraser C.M."/>
            <person name="Venter J.C."/>
        </authorList>
    </citation>
    <scope>NUCLEOTIDE SEQUENCE [LARGE SCALE GENOMIC DNA]</scope>
    <source>
        <strain>ATCC 700392 / 26695</strain>
    </source>
</reference>
<reference key="2">
    <citation type="journal article" date="2006" name="Biochemistry">
        <title>The nondiscriminating aspartyl-tRNA synthetase from Helicobacter pylori: anticodon-binding domain mutations that impact tRNA specificity and heterologous toxicity.</title>
        <authorList>
            <person name="Chuawong P."/>
            <person name="Hendrickson T.L."/>
        </authorList>
    </citation>
    <scope>FUNCTION AS A NON-DISCRIMINATING ASPRS</scope>
    <scope>CATALYTIC ACTIVITY</scope>
    <scope>SUBSTRATE SPECIFICITY</scope>
    <scope>KINETIC PARAMETERS</scope>
    <scope>MUTAGENESIS OF LEU-81 AND LEU-86</scope>
    <source>
        <strain>ATCC 700392 / 26695</strain>
    </source>
</reference>
<protein>
    <recommendedName>
        <fullName evidence="1">Aspartate--tRNA(Asp/Asn) ligase</fullName>
        <ecNumber evidence="1">6.1.1.23</ecNumber>
    </recommendedName>
    <alternativeName>
        <fullName evidence="1">Aspartyl-tRNA synthetase</fullName>
        <shortName evidence="1">AspRS</shortName>
    </alternativeName>
    <alternativeName>
        <fullName evidence="1">Non-discriminating aspartyl-tRNA synthetase</fullName>
        <shortName evidence="1">ND-AspRS</shortName>
    </alternativeName>
</protein>
<name>SYDND_HELPY</name>
<comment type="function">
    <text evidence="2">Aspartyl-tRNA synthetase with relaxed tRNA specificity since it is able to aspartylate not only its cognate tRNA(Asp) but also tRNA(Asn). Is 1.7 times more efficient at aminoacylating tRNA(Asp) over tRNA(Asn). Reaction proceeds in two steps: L-aspartate is first activated by ATP to form Asp-AMP and then transferred to the acceptor end of tRNA(Asp/Asn).</text>
</comment>
<comment type="catalytic activity">
    <reaction evidence="1 2">
        <text>tRNA(Asx) + L-aspartate + ATP = L-aspartyl-tRNA(Asx) + AMP + diphosphate</text>
        <dbReference type="Rhea" id="RHEA:18349"/>
        <dbReference type="Rhea" id="RHEA-COMP:9710"/>
        <dbReference type="Rhea" id="RHEA-COMP:9711"/>
        <dbReference type="ChEBI" id="CHEBI:29991"/>
        <dbReference type="ChEBI" id="CHEBI:30616"/>
        <dbReference type="ChEBI" id="CHEBI:33019"/>
        <dbReference type="ChEBI" id="CHEBI:78442"/>
        <dbReference type="ChEBI" id="CHEBI:78516"/>
        <dbReference type="ChEBI" id="CHEBI:456215"/>
        <dbReference type="EC" id="6.1.1.23"/>
    </reaction>
</comment>
<comment type="biophysicochemical properties">
    <kinetics>
        <KM evidence="2">0.77 uM for tRNA(Asp)</KM>
        <KM evidence="2">0.83 uM for tRNA(Asn)</KM>
        <text>kcat is 0.022 sec(-1) for tRNA(Asp) aspartylation and 0.014 sec(-1) for tRNA(Asn) aspartylation.</text>
    </kinetics>
</comment>
<comment type="subunit">
    <text evidence="1">Homodimer.</text>
</comment>
<comment type="subcellular location">
    <subcellularLocation>
        <location evidence="1">Cytoplasm</location>
    </subcellularLocation>
</comment>
<comment type="similarity">
    <text evidence="1">Belongs to the class-II aminoacyl-tRNA synthetase family. Type 1 subfamily.</text>
</comment>
<sequence length="577" mass="65602">MRSHFCTEISEKDVGKIVKVAGWCNTYRDHGGVVFIDLRDKSGLVQLVCDPSSKAYEKALEVRSEFVLVAKGKVRLRGAGLENPKLKTGKIEIVLEELIIENKSATPPIEIGNKHVNEDLRLKYRYLDLRSPNSYEIFKLRSEVALITRNTLAQKGFLEIETPILSKTTPEGARDYLVPSRVHEGEFFALPQSPQLFKQLLMVGGMDRYFQIARCFRDEDLRADRQPEFTQIDAEMSFCDENDVMGVVEDLLQEIFKAVGHTISKPFKRMPYKEAMENYGSDKPDLRFELPLIEVGDCFRDSSNAIFSNTAKDPKNKRIKALNVKGADALFSRSVLKELEEFVRQFGAKGLAYLQIKEDEIKGPLVKFLSEKGLKNILERTDAQVGDIVFFGAGDKKIVLDYMGRLRLKVAETLDLIDKDALNFLWVVNFPMFEKTENGYHAAHHPFTMPKNIECEDIEEVEAHAYDVVLNGVELGGGSIRIHKEEMQKKVFEKINIHEEEAQKKFGFLLEALKFGAPPHGGFAIGFDRLIMLMTKSHSIRDVIAFPKTQKASCLLTNAPSPINEEQLRELHIRLRK</sequence>
<evidence type="ECO:0000255" key="1">
    <source>
        <dbReference type="HAMAP-Rule" id="MF_00044"/>
    </source>
</evidence>
<evidence type="ECO:0000269" key="2">
    <source>
    </source>
</evidence>
<evidence type="ECO:0007829" key="3">
    <source>
        <dbReference type="PDB" id="5GRO"/>
    </source>
</evidence>
<proteinExistence type="evidence at protein level"/>
<dbReference type="EC" id="6.1.1.23" evidence="1"/>
<dbReference type="EMBL" id="AE000511">
    <property type="protein sequence ID" value="AAD07682.1"/>
    <property type="molecule type" value="Genomic_DNA"/>
</dbReference>
<dbReference type="PIR" id="A64597">
    <property type="entry name" value="A64597"/>
</dbReference>
<dbReference type="RefSeq" id="NP_207412.1">
    <property type="nucleotide sequence ID" value="NC_000915.1"/>
</dbReference>
<dbReference type="RefSeq" id="WP_001256425.1">
    <property type="nucleotide sequence ID" value="NC_018939.1"/>
</dbReference>
<dbReference type="PDB" id="5GRO">
    <property type="method" value="X-ray"/>
    <property type="resolution" value="2.00 A"/>
    <property type="chains" value="A/B=1-104"/>
</dbReference>
<dbReference type="PDBsum" id="5GRO"/>
<dbReference type="SMR" id="P56459"/>
<dbReference type="DIP" id="DIP-3174N"/>
<dbReference type="FunCoup" id="P56459">
    <property type="interactions" value="388"/>
</dbReference>
<dbReference type="IntAct" id="P56459">
    <property type="interactions" value="3"/>
</dbReference>
<dbReference type="MINT" id="P56459"/>
<dbReference type="STRING" id="85962.HP_0617"/>
<dbReference type="PaxDb" id="85962-C694_03190"/>
<dbReference type="EnsemblBacteria" id="AAD07682">
    <property type="protein sequence ID" value="AAD07682"/>
    <property type="gene ID" value="HP_0617"/>
</dbReference>
<dbReference type="KEGG" id="heo:C694_03190"/>
<dbReference type="KEGG" id="hpy:HP_0617"/>
<dbReference type="PATRIC" id="fig|85962.47.peg.665"/>
<dbReference type="eggNOG" id="COG0173">
    <property type="taxonomic scope" value="Bacteria"/>
</dbReference>
<dbReference type="InParanoid" id="P56459"/>
<dbReference type="OrthoDB" id="9802326at2"/>
<dbReference type="PhylomeDB" id="P56459"/>
<dbReference type="BRENDA" id="6.1.1.12">
    <property type="organism ID" value="2604"/>
</dbReference>
<dbReference type="Proteomes" id="UP000000429">
    <property type="component" value="Chromosome"/>
</dbReference>
<dbReference type="GO" id="GO:0005737">
    <property type="term" value="C:cytoplasm"/>
    <property type="evidence" value="ECO:0007669"/>
    <property type="project" value="UniProtKB-SubCell"/>
</dbReference>
<dbReference type="GO" id="GO:0004815">
    <property type="term" value="F:aspartate-tRNA ligase activity"/>
    <property type="evidence" value="ECO:0000318"/>
    <property type="project" value="GO_Central"/>
</dbReference>
<dbReference type="GO" id="GO:0050560">
    <property type="term" value="F:aspartate-tRNA(Asn) ligase activity"/>
    <property type="evidence" value="ECO:0007669"/>
    <property type="project" value="UniProtKB-EC"/>
</dbReference>
<dbReference type="GO" id="GO:0005524">
    <property type="term" value="F:ATP binding"/>
    <property type="evidence" value="ECO:0007669"/>
    <property type="project" value="UniProtKB-UniRule"/>
</dbReference>
<dbReference type="GO" id="GO:0003676">
    <property type="term" value="F:nucleic acid binding"/>
    <property type="evidence" value="ECO:0007669"/>
    <property type="project" value="InterPro"/>
</dbReference>
<dbReference type="GO" id="GO:0006422">
    <property type="term" value="P:aspartyl-tRNA aminoacylation"/>
    <property type="evidence" value="ECO:0000318"/>
    <property type="project" value="GO_Central"/>
</dbReference>
<dbReference type="CDD" id="cd00777">
    <property type="entry name" value="AspRS_core"/>
    <property type="match status" value="1"/>
</dbReference>
<dbReference type="CDD" id="cd04317">
    <property type="entry name" value="EcAspRS_like_N"/>
    <property type="match status" value="1"/>
</dbReference>
<dbReference type="Gene3D" id="3.30.930.10">
    <property type="entry name" value="Bira Bifunctional Protein, Domain 2"/>
    <property type="match status" value="1"/>
</dbReference>
<dbReference type="Gene3D" id="3.30.1360.30">
    <property type="entry name" value="GAD-like domain"/>
    <property type="match status" value="1"/>
</dbReference>
<dbReference type="Gene3D" id="2.40.50.140">
    <property type="entry name" value="Nucleic acid-binding proteins"/>
    <property type="match status" value="1"/>
</dbReference>
<dbReference type="HAMAP" id="MF_00044">
    <property type="entry name" value="Asp_tRNA_synth_type1"/>
    <property type="match status" value="1"/>
</dbReference>
<dbReference type="InterPro" id="IPR004364">
    <property type="entry name" value="Aa-tRNA-synt_II"/>
</dbReference>
<dbReference type="InterPro" id="IPR006195">
    <property type="entry name" value="aa-tRNA-synth_II"/>
</dbReference>
<dbReference type="InterPro" id="IPR045864">
    <property type="entry name" value="aa-tRNA-synth_II/BPL/LPL"/>
</dbReference>
<dbReference type="InterPro" id="IPR004524">
    <property type="entry name" value="Asp-tRNA-ligase_1"/>
</dbReference>
<dbReference type="InterPro" id="IPR047089">
    <property type="entry name" value="Asp-tRNA-ligase_1_N"/>
</dbReference>
<dbReference type="InterPro" id="IPR002312">
    <property type="entry name" value="Asp/Asn-tRNA-synth_IIb"/>
</dbReference>
<dbReference type="InterPro" id="IPR047090">
    <property type="entry name" value="AspRS_core"/>
</dbReference>
<dbReference type="InterPro" id="IPR004115">
    <property type="entry name" value="GAD-like_sf"/>
</dbReference>
<dbReference type="InterPro" id="IPR029351">
    <property type="entry name" value="GAD_dom"/>
</dbReference>
<dbReference type="InterPro" id="IPR012340">
    <property type="entry name" value="NA-bd_OB-fold"/>
</dbReference>
<dbReference type="InterPro" id="IPR004365">
    <property type="entry name" value="NA-bd_OB_tRNA"/>
</dbReference>
<dbReference type="NCBIfam" id="TIGR00459">
    <property type="entry name" value="aspS_bact"/>
    <property type="match status" value="1"/>
</dbReference>
<dbReference type="NCBIfam" id="NF001750">
    <property type="entry name" value="PRK00476.1"/>
    <property type="match status" value="1"/>
</dbReference>
<dbReference type="PANTHER" id="PTHR22594:SF5">
    <property type="entry name" value="ASPARTATE--TRNA LIGASE, MITOCHONDRIAL"/>
    <property type="match status" value="1"/>
</dbReference>
<dbReference type="PANTHER" id="PTHR22594">
    <property type="entry name" value="ASPARTYL/LYSYL-TRNA SYNTHETASE"/>
    <property type="match status" value="1"/>
</dbReference>
<dbReference type="Pfam" id="PF02938">
    <property type="entry name" value="GAD"/>
    <property type="match status" value="1"/>
</dbReference>
<dbReference type="Pfam" id="PF00152">
    <property type="entry name" value="tRNA-synt_2"/>
    <property type="match status" value="1"/>
</dbReference>
<dbReference type="Pfam" id="PF01336">
    <property type="entry name" value="tRNA_anti-codon"/>
    <property type="match status" value="1"/>
</dbReference>
<dbReference type="PRINTS" id="PR01042">
    <property type="entry name" value="TRNASYNTHASP"/>
</dbReference>
<dbReference type="SUPFAM" id="SSF55681">
    <property type="entry name" value="Class II aaRS and biotin synthetases"/>
    <property type="match status" value="1"/>
</dbReference>
<dbReference type="SUPFAM" id="SSF55261">
    <property type="entry name" value="GAD domain-like"/>
    <property type="match status" value="1"/>
</dbReference>
<dbReference type="SUPFAM" id="SSF50249">
    <property type="entry name" value="Nucleic acid-binding proteins"/>
    <property type="match status" value="1"/>
</dbReference>
<dbReference type="PROSITE" id="PS50862">
    <property type="entry name" value="AA_TRNA_LIGASE_II"/>
    <property type="match status" value="1"/>
</dbReference>
<keyword id="KW-0002">3D-structure</keyword>
<keyword id="KW-0030">Aminoacyl-tRNA synthetase</keyword>
<keyword id="KW-0067">ATP-binding</keyword>
<keyword id="KW-0963">Cytoplasm</keyword>
<keyword id="KW-0436">Ligase</keyword>
<keyword id="KW-0547">Nucleotide-binding</keyword>
<keyword id="KW-0648">Protein biosynthesis</keyword>
<keyword id="KW-1185">Reference proteome</keyword>
<feature type="chain" id="PRO_0000110883" description="Aspartate--tRNA(Asp/Asn) ligase">
    <location>
        <begin position="1"/>
        <end position="577"/>
    </location>
</feature>
<feature type="region of interest" description="Aspartate" evidence="1">
    <location>
        <begin position="195"/>
        <end position="198"/>
    </location>
</feature>
<feature type="binding site" evidence="1">
    <location>
        <position position="171"/>
    </location>
    <ligand>
        <name>L-aspartate</name>
        <dbReference type="ChEBI" id="CHEBI:29991"/>
    </ligand>
</feature>
<feature type="binding site" evidence="1">
    <location>
        <begin position="217"/>
        <end position="219"/>
    </location>
    <ligand>
        <name>ATP</name>
        <dbReference type="ChEBI" id="CHEBI:30616"/>
    </ligand>
</feature>
<feature type="binding site" evidence="1">
    <location>
        <position position="217"/>
    </location>
    <ligand>
        <name>L-aspartate</name>
        <dbReference type="ChEBI" id="CHEBI:29991"/>
    </ligand>
</feature>
<feature type="binding site" evidence="1">
    <location>
        <position position="226"/>
    </location>
    <ligand>
        <name>ATP</name>
        <dbReference type="ChEBI" id="CHEBI:30616"/>
    </ligand>
</feature>
<feature type="binding site" evidence="1">
    <location>
        <position position="444"/>
    </location>
    <ligand>
        <name>L-aspartate</name>
        <dbReference type="ChEBI" id="CHEBI:29991"/>
    </ligand>
</feature>
<feature type="binding site" evidence="1">
    <location>
        <position position="474"/>
    </location>
    <ligand>
        <name>ATP</name>
        <dbReference type="ChEBI" id="CHEBI:30616"/>
    </ligand>
</feature>
<feature type="binding site" evidence="1">
    <location>
        <position position="481"/>
    </location>
    <ligand>
        <name>L-aspartate</name>
        <dbReference type="ChEBI" id="CHEBI:29991"/>
    </ligand>
</feature>
<feature type="binding site" evidence="1">
    <location>
        <begin position="526"/>
        <end position="529"/>
    </location>
    <ligand>
        <name>ATP</name>
        <dbReference type="ChEBI" id="CHEBI:30616"/>
    </ligand>
</feature>
<feature type="site" description="Important for tRNA non-discrimination" evidence="1">
    <location>
        <position position="30"/>
    </location>
</feature>
<feature type="site" description="Important for tRNA non-discrimination" evidence="1">
    <location>
        <position position="80"/>
    </location>
</feature>
<feature type="mutagenesis site" description="Enhances enzyme specificity for tRNA(Asp) over tRNA(Asn), by reducing enzyme's ability to misacylate tRNA(Asn)." evidence="2">
    <original>L</original>
    <variation>N</variation>
    <location>
        <position position="81"/>
    </location>
</feature>
<feature type="mutagenesis site" description="Enhances enzyme specificity for tRNA(Asp) over tRNA(Asn), by reducing enzyme's ability to misacylate tRNA(Asn)." evidence="2">
    <original>L</original>
    <variation>M</variation>
    <location>
        <position position="86"/>
    </location>
</feature>
<feature type="helix" evidence="3">
    <location>
        <begin position="6"/>
        <end position="8"/>
    </location>
</feature>
<feature type="helix" evidence="3">
    <location>
        <begin position="11"/>
        <end position="13"/>
    </location>
</feature>
<feature type="strand" evidence="3">
    <location>
        <begin position="17"/>
        <end position="30"/>
    </location>
</feature>
<feature type="strand" evidence="3">
    <location>
        <begin position="33"/>
        <end position="40"/>
    </location>
</feature>
<feature type="strand" evidence="3">
    <location>
        <begin position="43"/>
        <end position="49"/>
    </location>
</feature>
<feature type="helix" evidence="3">
    <location>
        <begin position="56"/>
        <end position="59"/>
    </location>
</feature>
<feature type="strand" evidence="3">
    <location>
        <begin position="67"/>
        <end position="76"/>
    </location>
</feature>
<feature type="turn" evidence="3">
    <location>
        <begin position="87"/>
        <end position="90"/>
    </location>
</feature>
<feature type="strand" evidence="3">
    <location>
        <begin position="91"/>
        <end position="100"/>
    </location>
</feature>